<proteinExistence type="evidence at transcript level"/>
<comment type="function">
    <text evidence="1">Non-catalytic component of the proteasome, a multicatalytic proteinase complex which is characterized by its ability to cleave peptides with Arg, Phe, Tyr, Leu, and Glu adjacent to the leaving group at neutral or slightly basic pH. The proteasome has an ATP-dependent proteolytic activity (By similarity).</text>
</comment>
<comment type="subunit">
    <text evidence="1">The 26S proteasome consists of a 20S proteasome core and two 19S regulatory subunits. The 20S proteasome core is composed of 28 subunits that are arranged in four stacked rings, resulting in a barrel-shaped structure. The two end rings are each formed by seven alpha subunits, and the two central rings are each formed by seven beta subunits. The catalytic chamber with the active sites is on the inside of the barrel (By similarity).</text>
</comment>
<comment type="subcellular location">
    <subcellularLocation>
        <location evidence="2">Cytoplasm</location>
    </subcellularLocation>
    <subcellularLocation>
        <location evidence="1">Nucleus</location>
    </subcellularLocation>
</comment>
<comment type="similarity">
    <text evidence="2">Belongs to the peptidase T1B family.</text>
</comment>
<reference key="1">
    <citation type="journal article" date="2000" name="FEBS Lett.">
        <title>Identification of the goldfish 20S proteasome beta6 subunit bound to nuclear matrix.</title>
        <authorList>
            <person name="Tokumoto M."/>
            <person name="Yamaguchi A."/>
            <person name="Nagahama Y."/>
            <person name="Tokumoto T."/>
        </authorList>
    </citation>
    <scope>NUCLEOTIDE SEQUENCE [MRNA]</scope>
    <source>
        <tissue>Ovary</tissue>
    </source>
</reference>
<accession>Q9IB83</accession>
<feature type="chain" id="PRO_0000148034" description="Proteasome subunit beta type-1-B">
    <location>
        <begin position="1"/>
        <end position="237"/>
    </location>
</feature>
<keyword id="KW-0963">Cytoplasm</keyword>
<keyword id="KW-0539">Nucleus</keyword>
<keyword id="KW-0647">Proteasome</keyword>
<keyword id="KW-1185">Reference proteome</keyword>
<evidence type="ECO:0000250" key="1"/>
<evidence type="ECO:0000255" key="2">
    <source>
        <dbReference type="PROSITE-ProRule" id="PRU00809"/>
    </source>
</evidence>
<name>PSB1B_CARAU</name>
<sequence length="237" mass="26002">MISAQACGANGKMKDYHYSGPVEHKFSPYAFNGGTVLAVAGEDFALVASDTRLSEGYSIHSRDSPKCYKLTDTTVIGCSGFHGDCLTLTKIIEARLKMYKHSNNKSMTSGAIAAMLSTILYGRRFFPYYVYNIIGGLDEEGRGAVYSFDPVGSYQRDTYKAGGSASAMLQPLLDNQIGFKNMENVEQVPLSQEKAVQLVKDVFISAAERDVYTGDALKICIITKEGIREEIVPLRKD</sequence>
<protein>
    <recommendedName>
        <fullName>Proteasome subunit beta type-1-B</fullName>
    </recommendedName>
    <alternativeName>
        <fullName>20S proteasome beta-6 subunit B</fullName>
        <shortName>B6-B</shortName>
    </alternativeName>
</protein>
<organism>
    <name type="scientific">Carassius auratus</name>
    <name type="common">Goldfish</name>
    <dbReference type="NCBI Taxonomy" id="7957"/>
    <lineage>
        <taxon>Eukaryota</taxon>
        <taxon>Metazoa</taxon>
        <taxon>Chordata</taxon>
        <taxon>Craniata</taxon>
        <taxon>Vertebrata</taxon>
        <taxon>Euteleostomi</taxon>
        <taxon>Actinopterygii</taxon>
        <taxon>Neopterygii</taxon>
        <taxon>Teleostei</taxon>
        <taxon>Ostariophysi</taxon>
        <taxon>Cypriniformes</taxon>
        <taxon>Cyprinidae</taxon>
        <taxon>Cyprininae</taxon>
        <taxon>Carassius</taxon>
    </lineage>
</organism>
<gene>
    <name type="primary">psmb1-B</name>
</gene>
<dbReference type="EMBL" id="AB035497">
    <property type="protein sequence ID" value="BAA95592.1"/>
    <property type="molecule type" value="mRNA"/>
</dbReference>
<dbReference type="SMR" id="Q9IB83"/>
<dbReference type="Proteomes" id="UP000515129">
    <property type="component" value="Unplaced"/>
</dbReference>
<dbReference type="GO" id="GO:0005737">
    <property type="term" value="C:cytoplasm"/>
    <property type="evidence" value="ECO:0007669"/>
    <property type="project" value="UniProtKB-SubCell"/>
</dbReference>
<dbReference type="GO" id="GO:0005634">
    <property type="term" value="C:nucleus"/>
    <property type="evidence" value="ECO:0007669"/>
    <property type="project" value="UniProtKB-SubCell"/>
</dbReference>
<dbReference type="GO" id="GO:0005839">
    <property type="term" value="C:proteasome core complex"/>
    <property type="evidence" value="ECO:0000250"/>
    <property type="project" value="UniProtKB"/>
</dbReference>
<dbReference type="GO" id="GO:0019774">
    <property type="term" value="C:proteasome core complex, beta-subunit complex"/>
    <property type="evidence" value="ECO:0000250"/>
    <property type="project" value="UniProtKB"/>
</dbReference>
<dbReference type="GO" id="GO:0051603">
    <property type="term" value="P:proteolysis involved in protein catabolic process"/>
    <property type="evidence" value="ECO:0007669"/>
    <property type="project" value="InterPro"/>
</dbReference>
<dbReference type="CDD" id="cd03757">
    <property type="entry name" value="proteasome_beta_type_1"/>
    <property type="match status" value="1"/>
</dbReference>
<dbReference type="FunFam" id="3.60.20.10:FF:000033">
    <property type="entry name" value="Proteasome subunit beta"/>
    <property type="match status" value="1"/>
</dbReference>
<dbReference type="Gene3D" id="3.60.20.10">
    <property type="entry name" value="Glutamine Phosphoribosylpyrophosphate, subunit 1, domain 1"/>
    <property type="match status" value="1"/>
</dbReference>
<dbReference type="InterPro" id="IPR029055">
    <property type="entry name" value="Ntn_hydrolases_N"/>
</dbReference>
<dbReference type="InterPro" id="IPR016050">
    <property type="entry name" value="Proteasome_bsu_CS"/>
</dbReference>
<dbReference type="InterPro" id="IPR001353">
    <property type="entry name" value="Proteasome_sua/b"/>
</dbReference>
<dbReference type="InterPro" id="IPR023333">
    <property type="entry name" value="Proteasome_suB-type"/>
</dbReference>
<dbReference type="PANTHER" id="PTHR32194">
    <property type="entry name" value="METALLOPROTEASE TLDD"/>
    <property type="match status" value="1"/>
</dbReference>
<dbReference type="PANTHER" id="PTHR32194:SF2">
    <property type="entry name" value="PROTEASOME SUBUNIT BETA TYPE-1"/>
    <property type="match status" value="1"/>
</dbReference>
<dbReference type="Pfam" id="PF00227">
    <property type="entry name" value="Proteasome"/>
    <property type="match status" value="1"/>
</dbReference>
<dbReference type="SUPFAM" id="SSF56235">
    <property type="entry name" value="N-terminal nucleophile aminohydrolases (Ntn hydrolases)"/>
    <property type="match status" value="1"/>
</dbReference>
<dbReference type="PROSITE" id="PS00854">
    <property type="entry name" value="PROTEASOME_BETA_1"/>
    <property type="match status" value="1"/>
</dbReference>
<dbReference type="PROSITE" id="PS51476">
    <property type="entry name" value="PROTEASOME_BETA_2"/>
    <property type="match status" value="1"/>
</dbReference>